<accession>Q80ZV0</accession>
<accession>Q9D014</accession>
<proteinExistence type="evidence at protein level"/>
<evidence type="ECO:0000250" key="1"/>
<evidence type="ECO:0000250" key="2">
    <source>
        <dbReference type="UniProtKB" id="Q5TBB1"/>
    </source>
</evidence>
<evidence type="ECO:0000269" key="3">
    <source>
    </source>
</evidence>
<evidence type="ECO:0000305" key="4"/>
<evidence type="ECO:0007829" key="5">
    <source>
        <dbReference type="PDB" id="3KIO"/>
    </source>
</evidence>
<evidence type="ECO:0007829" key="6">
    <source>
        <dbReference type="PDB" id="3P5J"/>
    </source>
</evidence>
<comment type="function">
    <text evidence="3">Non catalytic subunit of RNase H2, an endonuclease that specifically degrades the RNA of RNA:DNA hybrids. Participates in DNA replication, possibly by mediating the removal of lagging-strand Okazaki fragment RNA primers during DNA replication. Mediates the excision of single ribonucleotides from DNA:RNA duplexes.</text>
</comment>
<comment type="subunit">
    <text evidence="3">The RNase H2 complex is a heterotrimer composed of the catalytic subunit RNASEH2A and the non-catalytic subunits RNASEH2B and RNASEH2C.</text>
</comment>
<comment type="subcellular location">
    <subcellularLocation>
        <location evidence="1">Nucleus</location>
    </subcellularLocation>
</comment>
<comment type="similarity">
    <text evidence="4">Belongs to the RNase H2 subunit B family.</text>
</comment>
<keyword id="KW-0002">3D-structure</keyword>
<keyword id="KW-0007">Acetylation</keyword>
<keyword id="KW-0539">Nucleus</keyword>
<keyword id="KW-0597">Phosphoprotein</keyword>
<keyword id="KW-1185">Reference proteome</keyword>
<protein>
    <recommendedName>
        <fullName>Ribonuclease H2 subunit B</fullName>
        <shortName>RNase H2 subunit B</shortName>
    </recommendedName>
    <alternativeName>
        <fullName>Deleted in lymphocytic leukemia 8 homolog</fullName>
    </alternativeName>
    <alternativeName>
        <fullName>Ribonuclease HI subunit B</fullName>
    </alternativeName>
</protein>
<dbReference type="EMBL" id="AK011914">
    <property type="protein sequence ID" value="BAB27913.1"/>
    <property type="molecule type" value="mRNA"/>
</dbReference>
<dbReference type="EMBL" id="AK082752">
    <property type="protein sequence ID" value="BAC38602.1"/>
    <property type="molecule type" value="mRNA"/>
</dbReference>
<dbReference type="EMBL" id="BC047997">
    <property type="protein sequence ID" value="AAH47997.1"/>
    <property type="molecule type" value="mRNA"/>
</dbReference>
<dbReference type="CCDS" id="CCDS27189.1"/>
<dbReference type="RefSeq" id="NP_080277.1">
    <property type="nucleotide sequence ID" value="NM_026001.3"/>
</dbReference>
<dbReference type="PDB" id="3KIO">
    <property type="method" value="X-ray"/>
    <property type="resolution" value="2.90 A"/>
    <property type="chains" value="B=1-308"/>
</dbReference>
<dbReference type="PDB" id="3P5J">
    <property type="method" value="X-ray"/>
    <property type="resolution" value="2.90 A"/>
    <property type="chains" value="B=1-308"/>
</dbReference>
<dbReference type="PDBsum" id="3KIO"/>
<dbReference type="PDBsum" id="3P5J"/>
<dbReference type="SMR" id="Q80ZV0"/>
<dbReference type="BioGRID" id="211980">
    <property type="interactions" value="4"/>
</dbReference>
<dbReference type="ComplexPortal" id="CPX-2875">
    <property type="entry name" value="RNase H2 complex"/>
</dbReference>
<dbReference type="FunCoup" id="Q80ZV0">
    <property type="interactions" value="1359"/>
</dbReference>
<dbReference type="STRING" id="10090.ENSMUSP00000022499"/>
<dbReference type="iPTMnet" id="Q80ZV0"/>
<dbReference type="PhosphoSitePlus" id="Q80ZV0"/>
<dbReference type="jPOST" id="Q80ZV0"/>
<dbReference type="PaxDb" id="10090-ENSMUSP00000022499"/>
<dbReference type="PeptideAtlas" id="Q80ZV0"/>
<dbReference type="ProteomicsDB" id="300430"/>
<dbReference type="Pumba" id="Q80ZV0"/>
<dbReference type="Antibodypedia" id="42315">
    <property type="antibodies" value="207 antibodies from 22 providers"/>
</dbReference>
<dbReference type="Ensembl" id="ENSMUST00000022499.13">
    <property type="protein sequence ID" value="ENSMUSP00000022499.7"/>
    <property type="gene ID" value="ENSMUSG00000021932.14"/>
</dbReference>
<dbReference type="GeneID" id="67153"/>
<dbReference type="KEGG" id="mmu:67153"/>
<dbReference type="UCSC" id="uc007ugl.1">
    <property type="organism name" value="mouse"/>
</dbReference>
<dbReference type="AGR" id="MGI:1914403"/>
<dbReference type="CTD" id="79621"/>
<dbReference type="MGI" id="MGI:1914403">
    <property type="gene designation" value="Rnaseh2b"/>
</dbReference>
<dbReference type="VEuPathDB" id="HostDB:ENSMUSG00000021932"/>
<dbReference type="eggNOG" id="KOG4705">
    <property type="taxonomic scope" value="Eukaryota"/>
</dbReference>
<dbReference type="GeneTree" id="ENSGT00390000011439"/>
<dbReference type="HOGENOM" id="CLU_059802_0_0_1"/>
<dbReference type="InParanoid" id="Q80ZV0"/>
<dbReference type="OMA" id="AQWVLIA"/>
<dbReference type="OrthoDB" id="29098at2759"/>
<dbReference type="PhylomeDB" id="Q80ZV0"/>
<dbReference type="TreeFam" id="TF105250"/>
<dbReference type="BioGRID-ORCS" id="67153">
    <property type="hits" value="21 hits in 80 CRISPR screens"/>
</dbReference>
<dbReference type="EvolutionaryTrace" id="Q80ZV0"/>
<dbReference type="PRO" id="PR:Q80ZV0"/>
<dbReference type="Proteomes" id="UP000000589">
    <property type="component" value="Chromosome 14"/>
</dbReference>
<dbReference type="RNAct" id="Q80ZV0">
    <property type="molecule type" value="protein"/>
</dbReference>
<dbReference type="Bgee" id="ENSMUSG00000021932">
    <property type="expression patterns" value="Expressed in undifferentiated genital tubercle and 247 other cell types or tissues"/>
</dbReference>
<dbReference type="ExpressionAtlas" id="Q80ZV0">
    <property type="expression patterns" value="baseline and differential"/>
</dbReference>
<dbReference type="GO" id="GO:0005654">
    <property type="term" value="C:nucleoplasm"/>
    <property type="evidence" value="ECO:0007669"/>
    <property type="project" value="Ensembl"/>
</dbReference>
<dbReference type="GO" id="GO:0032299">
    <property type="term" value="C:ribonuclease H2 complex"/>
    <property type="evidence" value="ECO:0000314"/>
    <property type="project" value="MGI"/>
</dbReference>
<dbReference type="GO" id="GO:0048144">
    <property type="term" value="P:fibroblast proliferation"/>
    <property type="evidence" value="ECO:0000315"/>
    <property type="project" value="MGI"/>
</dbReference>
<dbReference type="GO" id="GO:0010467">
    <property type="term" value="P:gene expression"/>
    <property type="evidence" value="ECO:0000315"/>
    <property type="project" value="MGI"/>
</dbReference>
<dbReference type="GO" id="GO:0001701">
    <property type="term" value="P:in utero embryonic development"/>
    <property type="evidence" value="ECO:0000315"/>
    <property type="project" value="MGI"/>
</dbReference>
<dbReference type="GO" id="GO:0006298">
    <property type="term" value="P:mismatch repair"/>
    <property type="evidence" value="ECO:0000303"/>
    <property type="project" value="ComplexPortal"/>
</dbReference>
<dbReference type="GO" id="GO:0010629">
    <property type="term" value="P:negative regulation of gene expression"/>
    <property type="evidence" value="ECO:0000315"/>
    <property type="project" value="MGI"/>
</dbReference>
<dbReference type="GO" id="GO:0048146">
    <property type="term" value="P:positive regulation of fibroblast proliferation"/>
    <property type="evidence" value="ECO:0000315"/>
    <property type="project" value="MGI"/>
</dbReference>
<dbReference type="GO" id="GO:2000001">
    <property type="term" value="P:regulation of DNA damage checkpoint"/>
    <property type="evidence" value="ECO:0000315"/>
    <property type="project" value="MGI"/>
</dbReference>
<dbReference type="GO" id="GO:0010389">
    <property type="term" value="P:regulation of G2/M transition of mitotic cell cycle"/>
    <property type="evidence" value="ECO:0000315"/>
    <property type="project" value="MGI"/>
</dbReference>
<dbReference type="GO" id="GO:0009259">
    <property type="term" value="P:ribonucleotide metabolic process"/>
    <property type="evidence" value="ECO:0000315"/>
    <property type="project" value="MGI"/>
</dbReference>
<dbReference type="GO" id="GO:0006401">
    <property type="term" value="P:RNA catabolic process"/>
    <property type="evidence" value="ECO:0000250"/>
    <property type="project" value="UniProtKB"/>
</dbReference>
<dbReference type="CDD" id="cd09270">
    <property type="entry name" value="RNase_H2-B"/>
    <property type="match status" value="1"/>
</dbReference>
<dbReference type="DisProt" id="DP01594"/>
<dbReference type="FunFam" id="1.10.20.120:FF:000001">
    <property type="entry name" value="Ribonuclease H2 subunit B"/>
    <property type="match status" value="1"/>
</dbReference>
<dbReference type="FunFam" id="2.20.25.530:FF:000001">
    <property type="entry name" value="Ribonuclease H2 subunit B"/>
    <property type="match status" value="1"/>
</dbReference>
<dbReference type="Gene3D" id="1.10.20.120">
    <property type="match status" value="1"/>
</dbReference>
<dbReference type="Gene3D" id="2.20.25.530">
    <property type="match status" value="1"/>
</dbReference>
<dbReference type="InterPro" id="IPR040456">
    <property type="entry name" value="RNase_H2_suB"/>
</dbReference>
<dbReference type="InterPro" id="IPR019024">
    <property type="entry name" value="RNase_H2_suB_wHTH"/>
</dbReference>
<dbReference type="InterPro" id="IPR041195">
    <property type="entry name" value="Rnh202_N"/>
</dbReference>
<dbReference type="PANTHER" id="PTHR13383">
    <property type="entry name" value="RIBONUCLEASE H2 SUBUNIT B"/>
    <property type="match status" value="1"/>
</dbReference>
<dbReference type="PANTHER" id="PTHR13383:SF11">
    <property type="entry name" value="RIBONUCLEASE H2 SUBUNIT B"/>
    <property type="match status" value="1"/>
</dbReference>
<dbReference type="Pfam" id="PF09468">
    <property type="entry name" value="RNase_H2-Ydr279"/>
    <property type="match status" value="1"/>
</dbReference>
<dbReference type="Pfam" id="PF17745">
    <property type="entry name" value="Ydr279_N"/>
    <property type="match status" value="1"/>
</dbReference>
<organism>
    <name type="scientific">Mus musculus</name>
    <name type="common">Mouse</name>
    <dbReference type="NCBI Taxonomy" id="10090"/>
    <lineage>
        <taxon>Eukaryota</taxon>
        <taxon>Metazoa</taxon>
        <taxon>Chordata</taxon>
        <taxon>Craniata</taxon>
        <taxon>Vertebrata</taxon>
        <taxon>Euteleostomi</taxon>
        <taxon>Mammalia</taxon>
        <taxon>Eutheria</taxon>
        <taxon>Euarchontoglires</taxon>
        <taxon>Glires</taxon>
        <taxon>Rodentia</taxon>
        <taxon>Myomorpha</taxon>
        <taxon>Muroidea</taxon>
        <taxon>Muridae</taxon>
        <taxon>Murinae</taxon>
        <taxon>Mus</taxon>
        <taxon>Mus</taxon>
    </lineage>
</organism>
<gene>
    <name type="primary">Rnaseh2b</name>
    <name type="synonym">Dleu8</name>
</gene>
<name>RNH2B_MOUSE</name>
<feature type="initiator methionine" description="Removed" evidence="2">
    <location>
        <position position="1"/>
    </location>
</feature>
<feature type="chain" id="PRO_0000248379" description="Ribonuclease H2 subunit B">
    <location>
        <begin position="2"/>
        <end position="308"/>
    </location>
</feature>
<feature type="modified residue" description="N-acetylalanine" evidence="2">
    <location>
        <position position="2"/>
    </location>
</feature>
<feature type="modified residue" description="N6-acetyllysine" evidence="2">
    <location>
        <position position="292"/>
    </location>
</feature>
<feature type="modified residue" description="Phosphoserine" evidence="2">
    <location>
        <position position="293"/>
    </location>
</feature>
<feature type="sequence conflict" description="In Ref. 2; AAH47997." evidence="4" ref="2">
    <original>T</original>
    <variation>P</variation>
    <location>
        <position position="239"/>
    </location>
</feature>
<feature type="strand" evidence="5">
    <location>
        <begin position="14"/>
        <end position="20"/>
    </location>
</feature>
<feature type="helix" evidence="5">
    <location>
        <begin position="21"/>
        <end position="24"/>
    </location>
</feature>
<feature type="strand" evidence="5">
    <location>
        <begin position="35"/>
        <end position="39"/>
    </location>
</feature>
<feature type="turn" evidence="5">
    <location>
        <begin position="43"/>
        <end position="46"/>
    </location>
</feature>
<feature type="strand" evidence="5">
    <location>
        <begin position="50"/>
        <end position="57"/>
    </location>
</feature>
<feature type="strand" evidence="5">
    <location>
        <begin position="61"/>
        <end position="66"/>
    </location>
</feature>
<feature type="strand" evidence="5">
    <location>
        <begin position="72"/>
        <end position="81"/>
    </location>
</feature>
<feature type="strand" evidence="5">
    <location>
        <begin position="85"/>
        <end position="94"/>
    </location>
</feature>
<feature type="helix" evidence="5">
    <location>
        <begin position="95"/>
        <end position="97"/>
    </location>
</feature>
<feature type="turn" evidence="5">
    <location>
        <begin position="98"/>
        <end position="100"/>
    </location>
</feature>
<feature type="turn" evidence="6">
    <location>
        <begin position="101"/>
        <end position="104"/>
    </location>
</feature>
<feature type="helix" evidence="6">
    <location>
        <begin position="125"/>
        <end position="129"/>
    </location>
</feature>
<feature type="helix" evidence="6">
    <location>
        <begin position="134"/>
        <end position="138"/>
    </location>
</feature>
<feature type="turn" evidence="6">
    <location>
        <begin position="139"/>
        <end position="141"/>
    </location>
</feature>
<feature type="helix" evidence="5">
    <location>
        <begin position="152"/>
        <end position="155"/>
    </location>
</feature>
<feature type="helix" evidence="5">
    <location>
        <begin position="161"/>
        <end position="174"/>
    </location>
</feature>
<feature type="turn" evidence="5">
    <location>
        <begin position="175"/>
        <end position="179"/>
    </location>
</feature>
<feature type="helix" evidence="6">
    <location>
        <begin position="205"/>
        <end position="214"/>
    </location>
</feature>
<feature type="helix" evidence="6">
    <location>
        <begin position="218"/>
        <end position="220"/>
    </location>
</feature>
<feature type="strand" evidence="6">
    <location>
        <begin position="221"/>
        <end position="226"/>
    </location>
</feature>
<feature type="turn" evidence="6">
    <location>
        <begin position="227"/>
        <end position="229"/>
    </location>
</feature>
<feature type="helix" evidence="5">
    <location>
        <begin position="274"/>
        <end position="277"/>
    </location>
</feature>
<feature type="turn" evidence="5">
    <location>
        <begin position="278"/>
        <end position="280"/>
    </location>
</feature>
<reference key="1">
    <citation type="journal article" date="2005" name="Science">
        <title>The transcriptional landscape of the mammalian genome.</title>
        <authorList>
            <person name="Carninci P."/>
            <person name="Kasukawa T."/>
            <person name="Katayama S."/>
            <person name="Gough J."/>
            <person name="Frith M.C."/>
            <person name="Maeda N."/>
            <person name="Oyama R."/>
            <person name="Ravasi T."/>
            <person name="Lenhard B."/>
            <person name="Wells C."/>
            <person name="Kodzius R."/>
            <person name="Shimokawa K."/>
            <person name="Bajic V.B."/>
            <person name="Brenner S.E."/>
            <person name="Batalov S."/>
            <person name="Forrest A.R."/>
            <person name="Zavolan M."/>
            <person name="Davis M.J."/>
            <person name="Wilming L.G."/>
            <person name="Aidinis V."/>
            <person name="Allen J.E."/>
            <person name="Ambesi-Impiombato A."/>
            <person name="Apweiler R."/>
            <person name="Aturaliya R.N."/>
            <person name="Bailey T.L."/>
            <person name="Bansal M."/>
            <person name="Baxter L."/>
            <person name="Beisel K.W."/>
            <person name="Bersano T."/>
            <person name="Bono H."/>
            <person name="Chalk A.M."/>
            <person name="Chiu K.P."/>
            <person name="Choudhary V."/>
            <person name="Christoffels A."/>
            <person name="Clutterbuck D.R."/>
            <person name="Crowe M.L."/>
            <person name="Dalla E."/>
            <person name="Dalrymple B.P."/>
            <person name="de Bono B."/>
            <person name="Della Gatta G."/>
            <person name="di Bernardo D."/>
            <person name="Down T."/>
            <person name="Engstrom P."/>
            <person name="Fagiolini M."/>
            <person name="Faulkner G."/>
            <person name="Fletcher C.F."/>
            <person name="Fukushima T."/>
            <person name="Furuno M."/>
            <person name="Futaki S."/>
            <person name="Gariboldi M."/>
            <person name="Georgii-Hemming P."/>
            <person name="Gingeras T.R."/>
            <person name="Gojobori T."/>
            <person name="Green R.E."/>
            <person name="Gustincich S."/>
            <person name="Harbers M."/>
            <person name="Hayashi Y."/>
            <person name="Hensch T.K."/>
            <person name="Hirokawa N."/>
            <person name="Hill D."/>
            <person name="Huminiecki L."/>
            <person name="Iacono M."/>
            <person name="Ikeo K."/>
            <person name="Iwama A."/>
            <person name="Ishikawa T."/>
            <person name="Jakt M."/>
            <person name="Kanapin A."/>
            <person name="Katoh M."/>
            <person name="Kawasawa Y."/>
            <person name="Kelso J."/>
            <person name="Kitamura H."/>
            <person name="Kitano H."/>
            <person name="Kollias G."/>
            <person name="Krishnan S.P."/>
            <person name="Kruger A."/>
            <person name="Kummerfeld S.K."/>
            <person name="Kurochkin I.V."/>
            <person name="Lareau L.F."/>
            <person name="Lazarevic D."/>
            <person name="Lipovich L."/>
            <person name="Liu J."/>
            <person name="Liuni S."/>
            <person name="McWilliam S."/>
            <person name="Madan Babu M."/>
            <person name="Madera M."/>
            <person name="Marchionni L."/>
            <person name="Matsuda H."/>
            <person name="Matsuzawa S."/>
            <person name="Miki H."/>
            <person name="Mignone F."/>
            <person name="Miyake S."/>
            <person name="Morris K."/>
            <person name="Mottagui-Tabar S."/>
            <person name="Mulder N."/>
            <person name="Nakano N."/>
            <person name="Nakauchi H."/>
            <person name="Ng P."/>
            <person name="Nilsson R."/>
            <person name="Nishiguchi S."/>
            <person name="Nishikawa S."/>
            <person name="Nori F."/>
            <person name="Ohara O."/>
            <person name="Okazaki Y."/>
            <person name="Orlando V."/>
            <person name="Pang K.C."/>
            <person name="Pavan W.J."/>
            <person name="Pavesi G."/>
            <person name="Pesole G."/>
            <person name="Petrovsky N."/>
            <person name="Piazza S."/>
            <person name="Reed J."/>
            <person name="Reid J.F."/>
            <person name="Ring B.Z."/>
            <person name="Ringwald M."/>
            <person name="Rost B."/>
            <person name="Ruan Y."/>
            <person name="Salzberg S.L."/>
            <person name="Sandelin A."/>
            <person name="Schneider C."/>
            <person name="Schoenbach C."/>
            <person name="Sekiguchi K."/>
            <person name="Semple C.A."/>
            <person name="Seno S."/>
            <person name="Sessa L."/>
            <person name="Sheng Y."/>
            <person name="Shibata Y."/>
            <person name="Shimada H."/>
            <person name="Shimada K."/>
            <person name="Silva D."/>
            <person name="Sinclair B."/>
            <person name="Sperling S."/>
            <person name="Stupka E."/>
            <person name="Sugiura K."/>
            <person name="Sultana R."/>
            <person name="Takenaka Y."/>
            <person name="Taki K."/>
            <person name="Tammoja K."/>
            <person name="Tan S.L."/>
            <person name="Tang S."/>
            <person name="Taylor M.S."/>
            <person name="Tegner J."/>
            <person name="Teichmann S.A."/>
            <person name="Ueda H.R."/>
            <person name="van Nimwegen E."/>
            <person name="Verardo R."/>
            <person name="Wei C.L."/>
            <person name="Yagi K."/>
            <person name="Yamanishi H."/>
            <person name="Zabarovsky E."/>
            <person name="Zhu S."/>
            <person name="Zimmer A."/>
            <person name="Hide W."/>
            <person name="Bult C."/>
            <person name="Grimmond S.M."/>
            <person name="Teasdale R.D."/>
            <person name="Liu E.T."/>
            <person name="Brusic V."/>
            <person name="Quackenbush J."/>
            <person name="Wahlestedt C."/>
            <person name="Mattick J.S."/>
            <person name="Hume D.A."/>
            <person name="Kai C."/>
            <person name="Sasaki D."/>
            <person name="Tomaru Y."/>
            <person name="Fukuda S."/>
            <person name="Kanamori-Katayama M."/>
            <person name="Suzuki M."/>
            <person name="Aoki J."/>
            <person name="Arakawa T."/>
            <person name="Iida J."/>
            <person name="Imamura K."/>
            <person name="Itoh M."/>
            <person name="Kato T."/>
            <person name="Kawaji H."/>
            <person name="Kawagashira N."/>
            <person name="Kawashima T."/>
            <person name="Kojima M."/>
            <person name="Kondo S."/>
            <person name="Konno H."/>
            <person name="Nakano K."/>
            <person name="Ninomiya N."/>
            <person name="Nishio T."/>
            <person name="Okada M."/>
            <person name="Plessy C."/>
            <person name="Shibata K."/>
            <person name="Shiraki T."/>
            <person name="Suzuki S."/>
            <person name="Tagami M."/>
            <person name="Waki K."/>
            <person name="Watahiki A."/>
            <person name="Okamura-Oho Y."/>
            <person name="Suzuki H."/>
            <person name="Kawai J."/>
            <person name="Hayashizaki Y."/>
        </authorList>
    </citation>
    <scope>NUCLEOTIDE SEQUENCE [LARGE SCALE MRNA]</scope>
    <source>
        <strain>C57BL/6J</strain>
    </source>
</reference>
<reference key="2">
    <citation type="journal article" date="2004" name="Genome Res.">
        <title>The status, quality, and expansion of the NIH full-length cDNA project: the Mammalian Gene Collection (MGC).</title>
        <authorList>
            <consortium name="The MGC Project Team"/>
        </authorList>
    </citation>
    <scope>NUCLEOTIDE SEQUENCE [LARGE SCALE MRNA]</scope>
    <source>
        <tissue>Limb</tissue>
    </source>
</reference>
<reference key="3">
    <citation type="journal article" date="2010" name="Cell">
        <title>A tissue-specific atlas of mouse protein phosphorylation and expression.</title>
        <authorList>
            <person name="Huttlin E.L."/>
            <person name="Jedrychowski M.P."/>
            <person name="Elias J.E."/>
            <person name="Goswami T."/>
            <person name="Rad R."/>
            <person name="Beausoleil S.A."/>
            <person name="Villen J."/>
            <person name="Haas W."/>
            <person name="Sowa M.E."/>
            <person name="Gygi S.P."/>
        </authorList>
    </citation>
    <scope>IDENTIFICATION BY MASS SPECTROMETRY [LARGE SCALE ANALYSIS]</scope>
    <source>
        <tissue>Spleen</tissue>
    </source>
</reference>
<reference key="4">
    <citation type="journal article" date="2010" name="J. Biol. Chem.">
        <title>The structure of the mammalian RNase H2 complex provides insight into RNA.NA hybrid processing to prevent immune dysfunction.</title>
        <authorList>
            <person name="Shaban N.M."/>
            <person name="Harvey S."/>
            <person name="Perrino F.W."/>
            <person name="Hollis T."/>
        </authorList>
    </citation>
    <scope>X-RAY CRYSTALLOGRAPHY (2.9 ANGSTROMS)</scope>
    <scope>FUNCTION</scope>
    <scope>SUBUNIT</scope>
</reference>
<sequence length="308" mass="34729">MAGGRDRGDLAARQLVFLLPEHLKDASKKKKKSSLLFVKLANPHSGEGATYLIDMCLQQLFEIKVFKEKHHSWFINQSVQSGGLLHFATPMDPLFLLLHYLLKAGKEGKYQPLDQVVVDDTFPDCTLLLRFPELEKSLRHVTEEKEVNSKKYYKYSSEKTLKWLEKKVNQTVVALKANNVNVGARVQSSAYFSGGQVSRDKEEDYVRYAHGLISDYIPKELSDDLSKFLKLPEPPASLTNPPSKKLKLSDEPVEAKEDYTKFNTKDLKTGKKNSKMTAAQKALAKVDKSGMKSIDAFFGAKNKKTGKI</sequence>